<gene>
    <name evidence="1" type="primary">rplE</name>
    <name type="ordered locus">SPT_0268</name>
</gene>
<feature type="chain" id="PRO_1000166155" description="Large ribosomal subunit protein uL5">
    <location>
        <begin position="1"/>
        <end position="180"/>
    </location>
</feature>
<dbReference type="EMBL" id="CP000921">
    <property type="protein sequence ID" value="ACO22947.1"/>
    <property type="molecule type" value="Genomic_DNA"/>
</dbReference>
<dbReference type="RefSeq" id="WP_000013542.1">
    <property type="nucleotide sequence ID" value="NC_012469.1"/>
</dbReference>
<dbReference type="SMR" id="C1CPA0"/>
<dbReference type="GeneID" id="93738969"/>
<dbReference type="KEGG" id="snt:SPT_0268"/>
<dbReference type="HOGENOM" id="CLU_061015_2_1_9"/>
<dbReference type="GO" id="GO:1990904">
    <property type="term" value="C:ribonucleoprotein complex"/>
    <property type="evidence" value="ECO:0007669"/>
    <property type="project" value="UniProtKB-KW"/>
</dbReference>
<dbReference type="GO" id="GO:0005840">
    <property type="term" value="C:ribosome"/>
    <property type="evidence" value="ECO:0007669"/>
    <property type="project" value="UniProtKB-KW"/>
</dbReference>
<dbReference type="GO" id="GO:0019843">
    <property type="term" value="F:rRNA binding"/>
    <property type="evidence" value="ECO:0007669"/>
    <property type="project" value="UniProtKB-UniRule"/>
</dbReference>
<dbReference type="GO" id="GO:0003735">
    <property type="term" value="F:structural constituent of ribosome"/>
    <property type="evidence" value="ECO:0007669"/>
    <property type="project" value="InterPro"/>
</dbReference>
<dbReference type="GO" id="GO:0000049">
    <property type="term" value="F:tRNA binding"/>
    <property type="evidence" value="ECO:0007669"/>
    <property type="project" value="UniProtKB-UniRule"/>
</dbReference>
<dbReference type="GO" id="GO:0006412">
    <property type="term" value="P:translation"/>
    <property type="evidence" value="ECO:0007669"/>
    <property type="project" value="UniProtKB-UniRule"/>
</dbReference>
<dbReference type="FunFam" id="3.30.1440.10:FF:000001">
    <property type="entry name" value="50S ribosomal protein L5"/>
    <property type="match status" value="1"/>
</dbReference>
<dbReference type="Gene3D" id="3.30.1440.10">
    <property type="match status" value="1"/>
</dbReference>
<dbReference type="HAMAP" id="MF_01333_B">
    <property type="entry name" value="Ribosomal_uL5_B"/>
    <property type="match status" value="1"/>
</dbReference>
<dbReference type="InterPro" id="IPR002132">
    <property type="entry name" value="Ribosomal_uL5"/>
</dbReference>
<dbReference type="InterPro" id="IPR020930">
    <property type="entry name" value="Ribosomal_uL5_bac-type"/>
</dbReference>
<dbReference type="InterPro" id="IPR031309">
    <property type="entry name" value="Ribosomal_uL5_C"/>
</dbReference>
<dbReference type="InterPro" id="IPR020929">
    <property type="entry name" value="Ribosomal_uL5_CS"/>
</dbReference>
<dbReference type="InterPro" id="IPR022803">
    <property type="entry name" value="Ribosomal_uL5_dom_sf"/>
</dbReference>
<dbReference type="InterPro" id="IPR031310">
    <property type="entry name" value="Ribosomal_uL5_N"/>
</dbReference>
<dbReference type="NCBIfam" id="NF000585">
    <property type="entry name" value="PRK00010.1"/>
    <property type="match status" value="1"/>
</dbReference>
<dbReference type="PANTHER" id="PTHR11994">
    <property type="entry name" value="60S RIBOSOMAL PROTEIN L11-RELATED"/>
    <property type="match status" value="1"/>
</dbReference>
<dbReference type="Pfam" id="PF00281">
    <property type="entry name" value="Ribosomal_L5"/>
    <property type="match status" value="1"/>
</dbReference>
<dbReference type="Pfam" id="PF00673">
    <property type="entry name" value="Ribosomal_L5_C"/>
    <property type="match status" value="1"/>
</dbReference>
<dbReference type="PIRSF" id="PIRSF002161">
    <property type="entry name" value="Ribosomal_L5"/>
    <property type="match status" value="1"/>
</dbReference>
<dbReference type="SUPFAM" id="SSF55282">
    <property type="entry name" value="RL5-like"/>
    <property type="match status" value="1"/>
</dbReference>
<dbReference type="PROSITE" id="PS00358">
    <property type="entry name" value="RIBOSOMAL_L5"/>
    <property type="match status" value="1"/>
</dbReference>
<reference key="1">
    <citation type="journal article" date="2010" name="Genome Biol.">
        <title>Structure and dynamics of the pan-genome of Streptococcus pneumoniae and closely related species.</title>
        <authorList>
            <person name="Donati C."/>
            <person name="Hiller N.L."/>
            <person name="Tettelin H."/>
            <person name="Muzzi A."/>
            <person name="Croucher N.J."/>
            <person name="Angiuoli S.V."/>
            <person name="Oggioni M."/>
            <person name="Dunning Hotopp J.C."/>
            <person name="Hu F.Z."/>
            <person name="Riley D.R."/>
            <person name="Covacci A."/>
            <person name="Mitchell T.J."/>
            <person name="Bentley S.D."/>
            <person name="Kilian M."/>
            <person name="Ehrlich G.D."/>
            <person name="Rappuoli R."/>
            <person name="Moxon E.R."/>
            <person name="Masignani V."/>
        </authorList>
    </citation>
    <scope>NUCLEOTIDE SEQUENCE [LARGE SCALE GENOMIC DNA]</scope>
    <source>
        <strain>Taiwan19F-14</strain>
    </source>
</reference>
<protein>
    <recommendedName>
        <fullName evidence="1">Large ribosomal subunit protein uL5</fullName>
    </recommendedName>
    <alternativeName>
        <fullName evidence="2">50S ribosomal protein L5</fullName>
    </alternativeName>
</protein>
<organism>
    <name type="scientific">Streptococcus pneumoniae (strain Taiwan19F-14)</name>
    <dbReference type="NCBI Taxonomy" id="487213"/>
    <lineage>
        <taxon>Bacteria</taxon>
        <taxon>Bacillati</taxon>
        <taxon>Bacillota</taxon>
        <taxon>Bacilli</taxon>
        <taxon>Lactobacillales</taxon>
        <taxon>Streptococcaceae</taxon>
        <taxon>Streptococcus</taxon>
    </lineage>
</organism>
<name>RL5_STRZT</name>
<accession>C1CPA0</accession>
<evidence type="ECO:0000255" key="1">
    <source>
        <dbReference type="HAMAP-Rule" id="MF_01333"/>
    </source>
</evidence>
<evidence type="ECO:0000305" key="2"/>
<keyword id="KW-0687">Ribonucleoprotein</keyword>
<keyword id="KW-0689">Ribosomal protein</keyword>
<keyword id="KW-0694">RNA-binding</keyword>
<keyword id="KW-0699">rRNA-binding</keyword>
<keyword id="KW-0820">tRNA-binding</keyword>
<sequence>MANRLKEKYLNEVVPALTEQFNYSSVMAVPKVDKIVLNMGVGEAVSNAKSLEKAAEELALISGQKPLITKAKKSIAGFRLREGVAIGAKVTLRGERMYEFLDKLVSVSLPRVRDFHGVPTKSFDGRGNYTLGVKEQLIFPEINFDDVDKTRGLDIVIVTTANTDEESRALLTGLGMPFAK</sequence>
<comment type="function">
    <text evidence="1">This is one of the proteins that bind and probably mediate the attachment of the 5S RNA into the large ribosomal subunit, where it forms part of the central protuberance. In the 70S ribosome it contacts protein S13 of the 30S subunit (bridge B1b), connecting the 2 subunits; this bridge is implicated in subunit movement. Contacts the P site tRNA; the 5S rRNA and some of its associated proteins might help stabilize positioning of ribosome-bound tRNAs.</text>
</comment>
<comment type="subunit">
    <text evidence="1">Part of the 50S ribosomal subunit; part of the 5S rRNA/L5/L18/L25 subcomplex. Contacts the 5S rRNA and the P site tRNA. Forms a bridge to the 30S subunit in the 70S ribosome.</text>
</comment>
<comment type="similarity">
    <text evidence="1">Belongs to the universal ribosomal protein uL5 family.</text>
</comment>
<proteinExistence type="inferred from homology"/>